<feature type="signal peptide" evidence="1">
    <location>
        <begin position="1"/>
        <end position="17"/>
    </location>
</feature>
<feature type="chain" id="PRO_0000404088" description="Fibronectin type III domain-containing protein" evidence="1">
    <location>
        <begin position="18"/>
        <end position="225"/>
    </location>
</feature>
<feature type="domain" description="Fibronectin type-III" evidence="2">
    <location>
        <begin position="106"/>
        <end position="206"/>
    </location>
</feature>
<feature type="non-terminal residue" evidence="4">
    <location>
        <position position="225"/>
    </location>
</feature>
<organism>
    <name type="scientific">Mytilus californianus</name>
    <name type="common">California mussel</name>
    <dbReference type="NCBI Taxonomy" id="6549"/>
    <lineage>
        <taxon>Eukaryota</taxon>
        <taxon>Metazoa</taxon>
        <taxon>Spiralia</taxon>
        <taxon>Lophotrochozoa</taxon>
        <taxon>Mollusca</taxon>
        <taxon>Bivalvia</taxon>
        <taxon>Autobranchia</taxon>
        <taxon>Pteriomorphia</taxon>
        <taxon>Mytilida</taxon>
        <taxon>Mytiloidea</taxon>
        <taxon>Mytilidae</taxon>
        <taxon>Mytilinae</taxon>
        <taxon>Mytilus</taxon>
    </lineage>
</organism>
<sequence>MFSFGIILLTVVSFTNAQWRQDMFTTAENQLRSIVQNGQTLLDFIYQERQKHGGGNMTGGSLMSHNVAYSSFINDVETRLADMEQATQELVRIMRTCPDAPLAPPPPTNVIVESTTIDNVSSIVVKWDPPFNPPENMQYKVYFVPVDQNGMQTAGEVVFRICDSTQTIASITDLTPRSRYRIRVGAVAGAVAEGASMPLNVKTPDIIPSRVRNVMVKSSTANTIT</sequence>
<accession>P86861</accession>
<evidence type="ECO:0000255" key="1"/>
<evidence type="ECO:0000255" key="2">
    <source>
        <dbReference type="PROSITE-ProRule" id="PRU00316"/>
    </source>
</evidence>
<evidence type="ECO:0000269" key="3">
    <source>
    </source>
</evidence>
<evidence type="ECO:0000303" key="4">
    <source>
    </source>
</evidence>
<evidence type="ECO:0000305" key="5"/>
<reference evidence="5" key="1">
    <citation type="submission" date="2008-12" db="EMBL/GenBank/DDBJ databases">
        <title>Expressed sequence tags from Mytilus californianus.</title>
        <authorList>
            <person name="Gracey A."/>
            <person name="Grimwood J."/>
            <person name="Schmutz J."/>
            <person name="Myers R.M."/>
        </authorList>
    </citation>
    <scope>NUCLEOTIDE SEQUENCE [MRNA]</scope>
</reference>
<reference evidence="5" key="2">
    <citation type="journal article" date="2011" name="J. Mol. Evol.">
        <title>Molecular evolution of mollusc shell proteins: insights from proteomic analysis of the edible mussel mytilus.</title>
        <authorList>
            <person name="Marie B."/>
            <person name="Le Roy N."/>
            <person name="Zanella-Cleon I."/>
            <person name="Becchi M."/>
            <person name="Marin F."/>
        </authorList>
    </citation>
    <scope>PROTEIN SEQUENCE OF 161-177</scope>
    <scope>SUBCELLULAR LOCATION</scope>
    <scope>TISSUE SPECIFICITY</scope>
    <source>
        <tissue evidence="3">Shell</tissue>
    </source>
</reference>
<protein>
    <recommendedName>
        <fullName>Fibronectin type III domain-containing protein</fullName>
    </recommendedName>
    <alternativeName>
        <fullName evidence="4">Fibronectin-like protein</fullName>
    </alternativeName>
</protein>
<comment type="subcellular location">
    <subcellularLocation>
        <location evidence="3">Secreted</location>
    </subcellularLocation>
</comment>
<comment type="tissue specificity">
    <text evidence="3">Component of the organic matrix of calcified shell layers like nacre and prisms.</text>
</comment>
<name>FND_MYTCA</name>
<proteinExistence type="evidence at protein level"/>
<dbReference type="EMBL" id="GE759315">
    <property type="status" value="NOT_ANNOTATED_CDS"/>
    <property type="molecule type" value="mRNA"/>
</dbReference>
<dbReference type="SMR" id="P86861"/>
<dbReference type="EnsemblMetazoa" id="XM_052223792.1">
    <property type="protein sequence ID" value="XP_052079752.1"/>
    <property type="gene ID" value="LOC127717922"/>
</dbReference>
<dbReference type="GO" id="GO:0005576">
    <property type="term" value="C:extracellular region"/>
    <property type="evidence" value="ECO:0007669"/>
    <property type="project" value="UniProtKB-SubCell"/>
</dbReference>
<dbReference type="CDD" id="cd00063">
    <property type="entry name" value="FN3"/>
    <property type="match status" value="1"/>
</dbReference>
<dbReference type="Gene3D" id="2.60.40.10">
    <property type="entry name" value="Immunoglobulins"/>
    <property type="match status" value="1"/>
</dbReference>
<dbReference type="InterPro" id="IPR003961">
    <property type="entry name" value="FN3_dom"/>
</dbReference>
<dbReference type="InterPro" id="IPR036116">
    <property type="entry name" value="FN3_sf"/>
</dbReference>
<dbReference type="InterPro" id="IPR013783">
    <property type="entry name" value="Ig-like_fold"/>
</dbReference>
<dbReference type="Pfam" id="PF00041">
    <property type="entry name" value="fn3"/>
    <property type="match status" value="1"/>
</dbReference>
<dbReference type="SMART" id="SM00060">
    <property type="entry name" value="FN3"/>
    <property type="match status" value="1"/>
</dbReference>
<dbReference type="SUPFAM" id="SSF49265">
    <property type="entry name" value="Fibronectin type III"/>
    <property type="match status" value="1"/>
</dbReference>
<dbReference type="PROSITE" id="PS50853">
    <property type="entry name" value="FN3"/>
    <property type="match status" value="1"/>
</dbReference>
<keyword id="KW-0903">Direct protein sequencing</keyword>
<keyword id="KW-0964">Secreted</keyword>
<keyword id="KW-0732">Signal</keyword>